<evidence type="ECO:0000255" key="1">
    <source>
        <dbReference type="HAMAP-Rule" id="MF_00758"/>
    </source>
</evidence>
<proteinExistence type="inferred from homology"/>
<protein>
    <recommendedName>
        <fullName evidence="1">UPF0301 protein YqgE</fullName>
    </recommendedName>
</protein>
<comment type="similarity">
    <text evidence="1">Belongs to the UPF0301 (AlgH) family.</text>
</comment>
<accession>B4THI1</accession>
<gene>
    <name evidence="1" type="primary">yqgE</name>
    <name type="ordered locus">SeHA_C3335</name>
</gene>
<organism>
    <name type="scientific">Salmonella heidelberg (strain SL476)</name>
    <dbReference type="NCBI Taxonomy" id="454169"/>
    <lineage>
        <taxon>Bacteria</taxon>
        <taxon>Pseudomonadati</taxon>
        <taxon>Pseudomonadota</taxon>
        <taxon>Gammaproteobacteria</taxon>
        <taxon>Enterobacterales</taxon>
        <taxon>Enterobacteriaceae</taxon>
        <taxon>Salmonella</taxon>
    </lineage>
</organism>
<dbReference type="EMBL" id="CP001120">
    <property type="protein sequence ID" value="ACF69582.1"/>
    <property type="molecule type" value="Genomic_DNA"/>
</dbReference>
<dbReference type="RefSeq" id="WP_001053167.1">
    <property type="nucleotide sequence ID" value="NC_011083.1"/>
</dbReference>
<dbReference type="SMR" id="B4THI1"/>
<dbReference type="KEGG" id="seh:SeHA_C3335"/>
<dbReference type="HOGENOM" id="CLU_057596_1_0_6"/>
<dbReference type="Proteomes" id="UP000001866">
    <property type="component" value="Chromosome"/>
</dbReference>
<dbReference type="GO" id="GO:0005829">
    <property type="term" value="C:cytosol"/>
    <property type="evidence" value="ECO:0007669"/>
    <property type="project" value="TreeGrafter"/>
</dbReference>
<dbReference type="FunFam" id="3.30.70.1300:FF:000001">
    <property type="entry name" value="UPF0301 protein YqgE"/>
    <property type="match status" value="1"/>
</dbReference>
<dbReference type="Gene3D" id="3.40.1740.10">
    <property type="entry name" value="VC0467-like"/>
    <property type="match status" value="1"/>
</dbReference>
<dbReference type="Gene3D" id="3.30.70.1300">
    <property type="entry name" value="VC0467-like domains"/>
    <property type="match status" value="1"/>
</dbReference>
<dbReference type="HAMAP" id="MF_00758">
    <property type="entry name" value="UPF0301"/>
    <property type="match status" value="1"/>
</dbReference>
<dbReference type="InterPro" id="IPR003774">
    <property type="entry name" value="AlgH-like"/>
</dbReference>
<dbReference type="NCBIfam" id="NF001266">
    <property type="entry name" value="PRK00228.1-1"/>
    <property type="match status" value="1"/>
</dbReference>
<dbReference type="PANTHER" id="PTHR30327">
    <property type="entry name" value="UNCHARACTERIZED PROTEIN YQGE"/>
    <property type="match status" value="1"/>
</dbReference>
<dbReference type="PANTHER" id="PTHR30327:SF1">
    <property type="entry name" value="UPF0301 PROTEIN YQGE"/>
    <property type="match status" value="1"/>
</dbReference>
<dbReference type="Pfam" id="PF02622">
    <property type="entry name" value="DUF179"/>
    <property type="match status" value="1"/>
</dbReference>
<dbReference type="SUPFAM" id="SSF143456">
    <property type="entry name" value="VC0467-like"/>
    <property type="match status" value="1"/>
</dbReference>
<feature type="chain" id="PRO_1000198295" description="UPF0301 protein YqgE">
    <location>
        <begin position="1"/>
        <end position="187"/>
    </location>
</feature>
<reference key="1">
    <citation type="journal article" date="2011" name="J. Bacteriol.">
        <title>Comparative genomics of 28 Salmonella enterica isolates: evidence for CRISPR-mediated adaptive sublineage evolution.</title>
        <authorList>
            <person name="Fricke W.F."/>
            <person name="Mammel M.K."/>
            <person name="McDermott P.F."/>
            <person name="Tartera C."/>
            <person name="White D.G."/>
            <person name="Leclerc J.E."/>
            <person name="Ravel J."/>
            <person name="Cebula T.A."/>
        </authorList>
    </citation>
    <scope>NUCLEOTIDE SEQUENCE [LARGE SCALE GENOMIC DNA]</scope>
    <source>
        <strain>SL476</strain>
    </source>
</reference>
<sequence length="187" mass="20695">MNLQHHFLIAMPALQDPIFRRSVVYICEHNQDGAMGIIINKPLENLQIEGILEKLKITPEPRDSAIRLDKAVMLGGPLAEDRGFILHTPPSRFASSIRISDNTVITTSRDVLETLGTQQQPSDVLVALGYASWDKGQLEQELLDNAWLTAPADLNILFKTPIAERWREAAKLIGIDILTMPGVAGHA</sequence>
<name>YQGE_SALHS</name>